<accession>P29581</accession>
<proteinExistence type="predicted"/>
<keyword id="KW-0614">Plasmid</keyword>
<protein>
    <recommendedName>
        <fullName>Uncharacterized protein ORF6'</fullName>
    </recommendedName>
</protein>
<feature type="chain" id="PRO_0000066440" description="Uncharacterized protein ORF6'">
    <location>
        <begin position="1"/>
        <end position="122"/>
    </location>
</feature>
<sequence>MRQIAEMRKEVSQHGFDVRMMEVPGMKVAIAGDGEVNYLFMLLPFRDKFKLKKRDVWLFKKLSYKFQARPFMVTFDKMLSFYPLHALEEAGEHFELDIRNSRGLMFSFDTIVSEQLQQRLVV</sequence>
<reference key="1">
    <citation type="journal article" date="1992" name="Nucleic Acids Res.">
        <title>Modular organization of related Archaeal plasmids encoding different restriction-modification systems in Methanobacterium thermoformicicum.</title>
        <authorList>
            <person name="Noelling J."/>
            <person name="van Eeden F.J.M."/>
            <person name="Eggen R.I.L."/>
            <person name="de Vos W.M."/>
        </authorList>
    </citation>
    <scope>NUCLEOTIDE SEQUENCE [GENOMIC DNA]</scope>
    <source>
        <strain>DSM 3720 / Z-245</strain>
    </source>
</reference>
<name>YPZ6_METTF</name>
<geneLocation type="plasmid">
    <name>pFZ1</name>
</geneLocation>
<dbReference type="EMBL" id="X68367">
    <property type="protein sequence ID" value="CAA48445.1"/>
    <property type="molecule type" value="Genomic_DNA"/>
</dbReference>
<dbReference type="PIR" id="S30321">
    <property type="entry name" value="S26455"/>
</dbReference>
<dbReference type="RefSeq" id="NP_039773.1">
    <property type="nucleotide sequence ID" value="NC_001337.1"/>
</dbReference>
<dbReference type="SMR" id="P29581"/>
<organism>
    <name type="scientific">Methanothermobacter thermautotrophicus</name>
    <name type="common">Methanobacterium thermoformicicum</name>
    <dbReference type="NCBI Taxonomy" id="145262"/>
    <lineage>
        <taxon>Archaea</taxon>
        <taxon>Methanobacteriati</taxon>
        <taxon>Methanobacteriota</taxon>
        <taxon>Methanomada group</taxon>
        <taxon>Methanobacteria</taxon>
        <taxon>Methanobacteriales</taxon>
        <taxon>Methanobacteriaceae</taxon>
        <taxon>Methanothermobacter</taxon>
    </lineage>
</organism>